<sequence length="369" mass="42445">MKLKTLTLTHYRNYETAELNFSDEVNIFIGINAQGKTNLLEAIYCLAMAKSHRTSNDKELIGWGHEFSHIEGMLSYKHGTMPLSLSISKKGKKAKVNYLEQKRLTEYIGHMNVVLFAPEDLNLVKGSPQIRRRFIDMEIGQISAVYLNDLSNYQRLLKQKNHLLKQMKLSNSNDMTMLEVINEQFAQYAVKLTLRRKMFIEQLETLAIPIHTGITKDKERLSLRYNASLNYELAEQEMFEETIRILNANMGKEIERTQSLYGPHRDDLSFKINDIDVQTYGSQGQQRTTALSIKLAEIELINQEIGEYPILLLDDVLSELDDDRQTHLLTTIQHKVQTFVTTTSVEGIEHETINKAKLFNVSEGQISTN</sequence>
<accession>B9E903</accession>
<evidence type="ECO:0000255" key="1">
    <source>
        <dbReference type="HAMAP-Rule" id="MF_00365"/>
    </source>
</evidence>
<gene>
    <name evidence="1" type="primary">recF</name>
    <name type="ordered locus">MCCL_0007</name>
</gene>
<name>RECF_MACCJ</name>
<feature type="chain" id="PRO_1000133693" description="DNA replication and repair protein RecF">
    <location>
        <begin position="1"/>
        <end position="369"/>
    </location>
</feature>
<feature type="binding site" evidence="1">
    <location>
        <begin position="30"/>
        <end position="37"/>
    </location>
    <ligand>
        <name>ATP</name>
        <dbReference type="ChEBI" id="CHEBI:30616"/>
    </ligand>
</feature>
<keyword id="KW-0067">ATP-binding</keyword>
<keyword id="KW-0963">Cytoplasm</keyword>
<keyword id="KW-0227">DNA damage</keyword>
<keyword id="KW-0234">DNA repair</keyword>
<keyword id="KW-0235">DNA replication</keyword>
<keyword id="KW-0238">DNA-binding</keyword>
<keyword id="KW-0547">Nucleotide-binding</keyword>
<keyword id="KW-1185">Reference proteome</keyword>
<keyword id="KW-0742">SOS response</keyword>
<proteinExistence type="inferred from homology"/>
<reference key="1">
    <citation type="journal article" date="2009" name="J. Bacteriol.">
        <title>Complete genome sequence of Macrococcus caseolyticus strain JCSCS5402, reflecting the ancestral genome of the human-pathogenic staphylococci.</title>
        <authorList>
            <person name="Baba T."/>
            <person name="Kuwahara-Arai K."/>
            <person name="Uchiyama I."/>
            <person name="Takeuchi F."/>
            <person name="Ito T."/>
            <person name="Hiramatsu K."/>
        </authorList>
    </citation>
    <scope>NUCLEOTIDE SEQUENCE [LARGE SCALE GENOMIC DNA]</scope>
    <source>
        <strain>JCSC5402</strain>
    </source>
</reference>
<protein>
    <recommendedName>
        <fullName evidence="1">DNA replication and repair protein RecF</fullName>
    </recommendedName>
</protein>
<organism>
    <name type="scientific">Macrococcus caseolyticus (strain JCSC5402)</name>
    <name type="common">Macrococcoides caseolyticum</name>
    <dbReference type="NCBI Taxonomy" id="458233"/>
    <lineage>
        <taxon>Bacteria</taxon>
        <taxon>Bacillati</taxon>
        <taxon>Bacillota</taxon>
        <taxon>Bacilli</taxon>
        <taxon>Bacillales</taxon>
        <taxon>Staphylococcaceae</taxon>
        <taxon>Macrococcoides</taxon>
    </lineage>
</organism>
<dbReference type="EMBL" id="AP009484">
    <property type="protein sequence ID" value="BAH16714.1"/>
    <property type="molecule type" value="Genomic_DNA"/>
</dbReference>
<dbReference type="RefSeq" id="WP_012655918.1">
    <property type="nucleotide sequence ID" value="NC_011999.1"/>
</dbReference>
<dbReference type="SMR" id="B9E903"/>
<dbReference type="STRING" id="458233.MCCL_0007"/>
<dbReference type="KEGG" id="mcl:MCCL_0007"/>
<dbReference type="eggNOG" id="COG1195">
    <property type="taxonomic scope" value="Bacteria"/>
</dbReference>
<dbReference type="HOGENOM" id="CLU_040267_0_1_9"/>
<dbReference type="OrthoDB" id="9803889at2"/>
<dbReference type="Proteomes" id="UP000001383">
    <property type="component" value="Chromosome"/>
</dbReference>
<dbReference type="GO" id="GO:0005737">
    <property type="term" value="C:cytoplasm"/>
    <property type="evidence" value="ECO:0007669"/>
    <property type="project" value="UniProtKB-SubCell"/>
</dbReference>
<dbReference type="GO" id="GO:0005524">
    <property type="term" value="F:ATP binding"/>
    <property type="evidence" value="ECO:0007669"/>
    <property type="project" value="UniProtKB-UniRule"/>
</dbReference>
<dbReference type="GO" id="GO:0003697">
    <property type="term" value="F:single-stranded DNA binding"/>
    <property type="evidence" value="ECO:0007669"/>
    <property type="project" value="UniProtKB-UniRule"/>
</dbReference>
<dbReference type="GO" id="GO:0006260">
    <property type="term" value="P:DNA replication"/>
    <property type="evidence" value="ECO:0007669"/>
    <property type="project" value="UniProtKB-UniRule"/>
</dbReference>
<dbReference type="GO" id="GO:0000731">
    <property type="term" value="P:DNA synthesis involved in DNA repair"/>
    <property type="evidence" value="ECO:0007669"/>
    <property type="project" value="TreeGrafter"/>
</dbReference>
<dbReference type="GO" id="GO:0006302">
    <property type="term" value="P:double-strand break repair"/>
    <property type="evidence" value="ECO:0007669"/>
    <property type="project" value="TreeGrafter"/>
</dbReference>
<dbReference type="GO" id="GO:0009432">
    <property type="term" value="P:SOS response"/>
    <property type="evidence" value="ECO:0007669"/>
    <property type="project" value="UniProtKB-UniRule"/>
</dbReference>
<dbReference type="CDD" id="cd03242">
    <property type="entry name" value="ABC_RecF"/>
    <property type="match status" value="1"/>
</dbReference>
<dbReference type="FunFam" id="1.20.1050.90:FF:000002">
    <property type="entry name" value="DNA replication and repair protein RecF"/>
    <property type="match status" value="1"/>
</dbReference>
<dbReference type="Gene3D" id="3.40.50.300">
    <property type="entry name" value="P-loop containing nucleotide triphosphate hydrolases"/>
    <property type="match status" value="1"/>
</dbReference>
<dbReference type="Gene3D" id="1.20.1050.90">
    <property type="entry name" value="RecF/RecN/SMC, N-terminal domain"/>
    <property type="match status" value="1"/>
</dbReference>
<dbReference type="HAMAP" id="MF_00365">
    <property type="entry name" value="RecF"/>
    <property type="match status" value="1"/>
</dbReference>
<dbReference type="InterPro" id="IPR001238">
    <property type="entry name" value="DNA-binding_RecF"/>
</dbReference>
<dbReference type="InterPro" id="IPR018078">
    <property type="entry name" value="DNA-binding_RecF_CS"/>
</dbReference>
<dbReference type="InterPro" id="IPR027417">
    <property type="entry name" value="P-loop_NTPase"/>
</dbReference>
<dbReference type="InterPro" id="IPR003395">
    <property type="entry name" value="RecF/RecN/SMC_N"/>
</dbReference>
<dbReference type="InterPro" id="IPR042174">
    <property type="entry name" value="RecF_2"/>
</dbReference>
<dbReference type="NCBIfam" id="TIGR00611">
    <property type="entry name" value="recf"/>
    <property type="match status" value="1"/>
</dbReference>
<dbReference type="PANTHER" id="PTHR32182">
    <property type="entry name" value="DNA REPLICATION AND REPAIR PROTEIN RECF"/>
    <property type="match status" value="1"/>
</dbReference>
<dbReference type="PANTHER" id="PTHR32182:SF0">
    <property type="entry name" value="DNA REPLICATION AND REPAIR PROTEIN RECF"/>
    <property type="match status" value="1"/>
</dbReference>
<dbReference type="Pfam" id="PF02463">
    <property type="entry name" value="SMC_N"/>
    <property type="match status" value="1"/>
</dbReference>
<dbReference type="SUPFAM" id="SSF52540">
    <property type="entry name" value="P-loop containing nucleoside triphosphate hydrolases"/>
    <property type="match status" value="1"/>
</dbReference>
<dbReference type="PROSITE" id="PS00617">
    <property type="entry name" value="RECF_1"/>
    <property type="match status" value="1"/>
</dbReference>
<dbReference type="PROSITE" id="PS00618">
    <property type="entry name" value="RECF_2"/>
    <property type="match status" value="1"/>
</dbReference>
<comment type="function">
    <text evidence="1">The RecF protein is involved in DNA metabolism; it is required for DNA replication and normal SOS inducibility. RecF binds preferentially to single-stranded, linear DNA. It also seems to bind ATP.</text>
</comment>
<comment type="subcellular location">
    <subcellularLocation>
        <location evidence="1">Cytoplasm</location>
    </subcellularLocation>
</comment>
<comment type="similarity">
    <text evidence="1">Belongs to the RecF family.</text>
</comment>